<accession>Q9P7B4</accession>
<gene>
    <name type="ORF">SPAC521.03</name>
</gene>
<proteinExistence type="evidence at protein level"/>
<protein>
    <recommendedName>
        <fullName evidence="3">NADP-dependent 3-hydroxy acid dehydrogenase</fullName>
    </recommendedName>
    <alternativeName>
        <fullName evidence="3">L-allo-threonine dehydrogenase</fullName>
        <ecNumber evidence="3">1.1.1.381</ecNumber>
    </alternativeName>
</protein>
<feature type="chain" id="PRO_0000372617" description="NADP-dependent 3-hydroxy acid dehydrogenase">
    <location>
        <begin position="1"/>
        <end position="259"/>
    </location>
</feature>
<feature type="active site" description="Proton acceptor" evidence="4">
    <location>
        <position position="158"/>
    </location>
</feature>
<feature type="active site" description="Lowers pKa of active site Tyr" evidence="2">
    <location>
        <position position="162"/>
    </location>
</feature>
<feature type="binding site" evidence="1">
    <location>
        <position position="11"/>
    </location>
    <ligand>
        <name>NADP(+)</name>
        <dbReference type="ChEBI" id="CHEBI:58349"/>
    </ligand>
</feature>
<feature type="binding site" evidence="1">
    <location>
        <position position="65"/>
    </location>
    <ligand>
        <name>NADP(+)</name>
        <dbReference type="ChEBI" id="CHEBI:58349"/>
    </ligand>
</feature>
<feature type="binding site" evidence="2">
    <location>
        <position position="92"/>
    </location>
    <ligand>
        <name>NADP(+)</name>
        <dbReference type="ChEBI" id="CHEBI:58349"/>
    </ligand>
</feature>
<feature type="binding site" evidence="1">
    <location>
        <position position="126"/>
    </location>
    <ligand>
        <name>NADP(+)</name>
        <dbReference type="ChEBI" id="CHEBI:58349"/>
    </ligand>
</feature>
<feature type="binding site" evidence="2">
    <location>
        <position position="158"/>
    </location>
    <ligand>
        <name>NADP(+)</name>
        <dbReference type="ChEBI" id="CHEBI:58349"/>
    </ligand>
</feature>
<feature type="binding site" evidence="2">
    <location>
        <position position="162"/>
    </location>
    <ligand>
        <name>NADP(+)</name>
        <dbReference type="ChEBI" id="CHEBI:58349"/>
    </ligand>
</feature>
<feature type="binding site" evidence="2">
    <location>
        <position position="191"/>
    </location>
    <ligand>
        <name>NADP(+)</name>
        <dbReference type="ChEBI" id="CHEBI:58349"/>
    </ligand>
</feature>
<feature type="modified residue" description="Phosphoserine" evidence="6">
    <location>
        <position position="42"/>
    </location>
</feature>
<feature type="modified residue" description="Phosphothreonine" evidence="6">
    <location>
        <position position="43"/>
    </location>
</feature>
<evidence type="ECO:0000250" key="1">
    <source>
        <dbReference type="UniProtKB" id="L0E2Z4"/>
    </source>
</evidence>
<evidence type="ECO:0000250" key="2">
    <source>
        <dbReference type="UniProtKB" id="O93868"/>
    </source>
</evidence>
<evidence type="ECO:0000250" key="3">
    <source>
        <dbReference type="UniProtKB" id="Q05016"/>
    </source>
</evidence>
<evidence type="ECO:0000255" key="4">
    <source>
        <dbReference type="PROSITE-ProRule" id="PRU10001"/>
    </source>
</evidence>
<evidence type="ECO:0000269" key="5">
    <source>
    </source>
</evidence>
<evidence type="ECO:0000269" key="6">
    <source>
    </source>
</evidence>
<evidence type="ECO:0000305" key="7"/>
<comment type="function">
    <text evidence="3">NADP-dependent dehydrogenase with broad substrate specificity acting on 3-hydroxy acids. Catalyzes the NADP-dependent oxidation of L-allo-threonine to L-2-amino-3-keto-butyrate, which is spontaneously decarboxylated into aminoacetone. Also acts on D-threonine, L-serine, D-serine, D-3-hydroxyisobutyrate, L-3-hydroxyisobutyrate, D-glycerate and L-glycerate.</text>
</comment>
<comment type="catalytic activity">
    <reaction evidence="3">
        <text>L-allo-threonine + NADP(+) = aminoacetone + CO2 + NADPH</text>
        <dbReference type="Rhea" id="RHEA:43524"/>
        <dbReference type="ChEBI" id="CHEBI:16526"/>
        <dbReference type="ChEBI" id="CHEBI:57783"/>
        <dbReference type="ChEBI" id="CHEBI:58320"/>
        <dbReference type="ChEBI" id="CHEBI:58349"/>
        <dbReference type="ChEBI" id="CHEBI:58585"/>
        <dbReference type="EC" id="1.1.1.381"/>
    </reaction>
</comment>
<comment type="subunit">
    <text evidence="3">Homotetramer.</text>
</comment>
<comment type="subcellular location">
    <subcellularLocation>
        <location evidence="5">Cytoplasm</location>
    </subcellularLocation>
    <subcellularLocation>
        <location evidence="3">Nucleus</location>
    </subcellularLocation>
</comment>
<comment type="similarity">
    <text evidence="7">Belongs to the short-chain dehydrogenases/reductases (SDR) family.</text>
</comment>
<reference key="1">
    <citation type="journal article" date="2002" name="Nature">
        <title>The genome sequence of Schizosaccharomyces pombe.</title>
        <authorList>
            <person name="Wood V."/>
            <person name="Gwilliam R."/>
            <person name="Rajandream M.A."/>
            <person name="Lyne M.H."/>
            <person name="Lyne R."/>
            <person name="Stewart A."/>
            <person name="Sgouros J.G."/>
            <person name="Peat N."/>
            <person name="Hayles J."/>
            <person name="Baker S.G."/>
            <person name="Basham D."/>
            <person name="Bowman S."/>
            <person name="Brooks K."/>
            <person name="Brown D."/>
            <person name="Brown S."/>
            <person name="Chillingworth T."/>
            <person name="Churcher C.M."/>
            <person name="Collins M."/>
            <person name="Connor R."/>
            <person name="Cronin A."/>
            <person name="Davis P."/>
            <person name="Feltwell T."/>
            <person name="Fraser A."/>
            <person name="Gentles S."/>
            <person name="Goble A."/>
            <person name="Hamlin N."/>
            <person name="Harris D.E."/>
            <person name="Hidalgo J."/>
            <person name="Hodgson G."/>
            <person name="Holroyd S."/>
            <person name="Hornsby T."/>
            <person name="Howarth S."/>
            <person name="Huckle E.J."/>
            <person name="Hunt S."/>
            <person name="Jagels K."/>
            <person name="James K.D."/>
            <person name="Jones L."/>
            <person name="Jones M."/>
            <person name="Leather S."/>
            <person name="McDonald S."/>
            <person name="McLean J."/>
            <person name="Mooney P."/>
            <person name="Moule S."/>
            <person name="Mungall K.L."/>
            <person name="Murphy L.D."/>
            <person name="Niblett D."/>
            <person name="Odell C."/>
            <person name="Oliver K."/>
            <person name="O'Neil S."/>
            <person name="Pearson D."/>
            <person name="Quail M.A."/>
            <person name="Rabbinowitsch E."/>
            <person name="Rutherford K.M."/>
            <person name="Rutter S."/>
            <person name="Saunders D."/>
            <person name="Seeger K."/>
            <person name="Sharp S."/>
            <person name="Skelton J."/>
            <person name="Simmonds M.N."/>
            <person name="Squares R."/>
            <person name="Squares S."/>
            <person name="Stevens K."/>
            <person name="Taylor K."/>
            <person name="Taylor R.G."/>
            <person name="Tivey A."/>
            <person name="Walsh S.V."/>
            <person name="Warren T."/>
            <person name="Whitehead S."/>
            <person name="Woodward J.R."/>
            <person name="Volckaert G."/>
            <person name="Aert R."/>
            <person name="Robben J."/>
            <person name="Grymonprez B."/>
            <person name="Weltjens I."/>
            <person name="Vanstreels E."/>
            <person name="Rieger M."/>
            <person name="Schaefer M."/>
            <person name="Mueller-Auer S."/>
            <person name="Gabel C."/>
            <person name="Fuchs M."/>
            <person name="Duesterhoeft A."/>
            <person name="Fritzc C."/>
            <person name="Holzer E."/>
            <person name="Moestl D."/>
            <person name="Hilbert H."/>
            <person name="Borzym K."/>
            <person name="Langer I."/>
            <person name="Beck A."/>
            <person name="Lehrach H."/>
            <person name="Reinhardt R."/>
            <person name="Pohl T.M."/>
            <person name="Eger P."/>
            <person name="Zimmermann W."/>
            <person name="Wedler H."/>
            <person name="Wambutt R."/>
            <person name="Purnelle B."/>
            <person name="Goffeau A."/>
            <person name="Cadieu E."/>
            <person name="Dreano S."/>
            <person name="Gloux S."/>
            <person name="Lelaure V."/>
            <person name="Mottier S."/>
            <person name="Galibert F."/>
            <person name="Aves S.J."/>
            <person name="Xiang Z."/>
            <person name="Hunt C."/>
            <person name="Moore K."/>
            <person name="Hurst S.M."/>
            <person name="Lucas M."/>
            <person name="Rochet M."/>
            <person name="Gaillardin C."/>
            <person name="Tallada V.A."/>
            <person name="Garzon A."/>
            <person name="Thode G."/>
            <person name="Daga R.R."/>
            <person name="Cruzado L."/>
            <person name="Jimenez J."/>
            <person name="Sanchez M."/>
            <person name="del Rey F."/>
            <person name="Benito J."/>
            <person name="Dominguez A."/>
            <person name="Revuelta J.L."/>
            <person name="Moreno S."/>
            <person name="Armstrong J."/>
            <person name="Forsburg S.L."/>
            <person name="Cerutti L."/>
            <person name="Lowe T."/>
            <person name="McCombie W.R."/>
            <person name="Paulsen I."/>
            <person name="Potashkin J."/>
            <person name="Shpakovski G.V."/>
            <person name="Ussery D."/>
            <person name="Barrell B.G."/>
            <person name="Nurse P."/>
        </authorList>
    </citation>
    <scope>NUCLEOTIDE SEQUENCE [LARGE SCALE GENOMIC DNA]</scope>
    <source>
        <strain>972 / ATCC 24843</strain>
    </source>
</reference>
<reference key="2">
    <citation type="journal article" date="2006" name="Nat. Biotechnol.">
        <title>ORFeome cloning and global analysis of protein localization in the fission yeast Schizosaccharomyces pombe.</title>
        <authorList>
            <person name="Matsuyama A."/>
            <person name="Arai R."/>
            <person name="Yashiroda Y."/>
            <person name="Shirai A."/>
            <person name="Kamata A."/>
            <person name="Sekido S."/>
            <person name="Kobayashi Y."/>
            <person name="Hashimoto A."/>
            <person name="Hamamoto M."/>
            <person name="Hiraoka Y."/>
            <person name="Horinouchi S."/>
            <person name="Yoshida M."/>
        </authorList>
    </citation>
    <scope>SUBCELLULAR LOCATION [LARGE SCALE ANALYSIS]</scope>
</reference>
<reference key="3">
    <citation type="journal article" date="2008" name="J. Proteome Res.">
        <title>Phosphoproteome analysis of fission yeast.</title>
        <authorList>
            <person name="Wilson-Grady J.T."/>
            <person name="Villen J."/>
            <person name="Gygi S.P."/>
        </authorList>
    </citation>
    <scope>PHOSPHORYLATION [LARGE SCALE ANALYSIS] AT SER-42 AND THR-43</scope>
    <scope>IDENTIFICATION BY MASS SPECTROMETRY</scope>
</reference>
<dbReference type="EC" id="1.1.1.381" evidence="3"/>
<dbReference type="EMBL" id="CU329670">
    <property type="protein sequence ID" value="CAB86467.1"/>
    <property type="molecule type" value="Genomic_DNA"/>
</dbReference>
<dbReference type="RefSeq" id="NP_593098.1">
    <property type="nucleotide sequence ID" value="NM_001018495.2"/>
</dbReference>
<dbReference type="SMR" id="Q9P7B4"/>
<dbReference type="BioGRID" id="279881">
    <property type="interactions" value="10"/>
</dbReference>
<dbReference type="FunCoup" id="Q9P7B4">
    <property type="interactions" value="61"/>
</dbReference>
<dbReference type="STRING" id="284812.Q9P7B4"/>
<dbReference type="iPTMnet" id="Q9P7B4"/>
<dbReference type="PaxDb" id="4896-SPAC521.03.1"/>
<dbReference type="EnsemblFungi" id="SPAC521.03.1">
    <property type="protein sequence ID" value="SPAC521.03.1:pep"/>
    <property type="gene ID" value="SPAC521.03"/>
</dbReference>
<dbReference type="KEGG" id="spo:2543461"/>
<dbReference type="PomBase" id="SPAC521.03"/>
<dbReference type="VEuPathDB" id="FungiDB:SPAC521.03"/>
<dbReference type="eggNOG" id="KOG1205">
    <property type="taxonomic scope" value="Eukaryota"/>
</dbReference>
<dbReference type="HOGENOM" id="CLU_010194_2_10_1"/>
<dbReference type="InParanoid" id="Q9P7B4"/>
<dbReference type="OMA" id="MGTDNIP"/>
<dbReference type="PhylomeDB" id="Q9P7B4"/>
<dbReference type="PRO" id="PR:Q9P7B4"/>
<dbReference type="Proteomes" id="UP000002485">
    <property type="component" value="Chromosome I"/>
</dbReference>
<dbReference type="GO" id="GO:0005829">
    <property type="term" value="C:cytosol"/>
    <property type="evidence" value="ECO:0007005"/>
    <property type="project" value="PomBase"/>
</dbReference>
<dbReference type="GO" id="GO:0005634">
    <property type="term" value="C:nucleus"/>
    <property type="evidence" value="ECO:0007669"/>
    <property type="project" value="UniProtKB-SubCell"/>
</dbReference>
<dbReference type="GO" id="GO:0016491">
    <property type="term" value="F:oxidoreductase activity"/>
    <property type="evidence" value="ECO:0000318"/>
    <property type="project" value="GO_Central"/>
</dbReference>
<dbReference type="CDD" id="cd05346">
    <property type="entry name" value="SDR_c5"/>
    <property type="match status" value="1"/>
</dbReference>
<dbReference type="FunFam" id="3.40.50.720:FF:000047">
    <property type="entry name" value="NADP-dependent L-serine/L-allo-threonine dehydrogenase"/>
    <property type="match status" value="1"/>
</dbReference>
<dbReference type="Gene3D" id="3.40.50.720">
    <property type="entry name" value="NAD(P)-binding Rossmann-like Domain"/>
    <property type="match status" value="1"/>
</dbReference>
<dbReference type="InterPro" id="IPR036291">
    <property type="entry name" value="NAD(P)-bd_dom_sf"/>
</dbReference>
<dbReference type="InterPro" id="IPR020904">
    <property type="entry name" value="Sc_DH/Rdtase_CS"/>
</dbReference>
<dbReference type="InterPro" id="IPR002347">
    <property type="entry name" value="SDR_fam"/>
</dbReference>
<dbReference type="PANTHER" id="PTHR42901">
    <property type="entry name" value="ALCOHOL DEHYDROGENASE"/>
    <property type="match status" value="1"/>
</dbReference>
<dbReference type="PANTHER" id="PTHR42901:SF1">
    <property type="entry name" value="ALCOHOL DEHYDROGENASE"/>
    <property type="match status" value="1"/>
</dbReference>
<dbReference type="Pfam" id="PF00106">
    <property type="entry name" value="adh_short"/>
    <property type="match status" value="1"/>
</dbReference>
<dbReference type="PRINTS" id="PR00081">
    <property type="entry name" value="GDHRDH"/>
</dbReference>
<dbReference type="PRINTS" id="PR00080">
    <property type="entry name" value="SDRFAMILY"/>
</dbReference>
<dbReference type="SUPFAM" id="SSF51735">
    <property type="entry name" value="NAD(P)-binding Rossmann-fold domains"/>
    <property type="match status" value="1"/>
</dbReference>
<dbReference type="PROSITE" id="PS00061">
    <property type="entry name" value="ADH_SHORT"/>
    <property type="match status" value="1"/>
</dbReference>
<keyword id="KW-0963">Cytoplasm</keyword>
<keyword id="KW-0521">NADP</keyword>
<keyword id="KW-0539">Nucleus</keyword>
<keyword id="KW-0560">Oxidoreductase</keyword>
<keyword id="KW-0597">Phosphoprotein</keyword>
<keyword id="KW-1185">Reference proteome</keyword>
<organism>
    <name type="scientific">Schizosaccharomyces pombe (strain 972 / ATCC 24843)</name>
    <name type="common">Fission yeast</name>
    <dbReference type="NCBI Taxonomy" id="284812"/>
    <lineage>
        <taxon>Eukaryota</taxon>
        <taxon>Fungi</taxon>
        <taxon>Dikarya</taxon>
        <taxon>Ascomycota</taxon>
        <taxon>Taphrinomycotina</taxon>
        <taxon>Schizosaccharomycetes</taxon>
        <taxon>Schizosaccharomycetales</taxon>
        <taxon>Schizosaccharomycetaceae</taxon>
        <taxon>Schizosaccharomyces</taxon>
    </lineage>
</organism>
<sequence>MSRLDGKTILITGASSGIGKSTAFEIAKVAKVKLILAARRFSTVEEIAKELESKYEVSVLPLKLDVSDLKSIPGVIESLPKEFADIDVLINNAGLALGTDKVIDLNIDDAVTMITTNVLGMMAMTRAVLPIFYSKNKGDILNVGSIAGRESYVGGSVYCSTKSALAQFTSALRKETIDTRIRIMEVDPGLVETEFSVVRFHGDKQKADNVYKNSEPLTPEDIAEVILFALTRRENVVIADTLVFPSHQGGANHVYRKQA</sequence>
<name>YI13_SCHPO</name>